<feature type="chain" id="PRO_1000116482" description="UDP-N-acetylglucosamine--N-acetylmuramyl-(pentapeptide) pyrophosphoryl-undecaprenol N-acetylglucosamine transferase">
    <location>
        <begin position="1"/>
        <end position="379"/>
    </location>
</feature>
<feature type="binding site" evidence="1">
    <location>
        <begin position="13"/>
        <end position="15"/>
    </location>
    <ligand>
        <name>UDP-N-acetyl-alpha-D-glucosamine</name>
        <dbReference type="ChEBI" id="CHEBI:57705"/>
    </ligand>
</feature>
<feature type="binding site" evidence="1">
    <location>
        <position position="123"/>
    </location>
    <ligand>
        <name>UDP-N-acetyl-alpha-D-glucosamine</name>
        <dbReference type="ChEBI" id="CHEBI:57705"/>
    </ligand>
</feature>
<feature type="binding site" evidence="1">
    <location>
        <position position="166"/>
    </location>
    <ligand>
        <name>UDP-N-acetyl-alpha-D-glucosamine</name>
        <dbReference type="ChEBI" id="CHEBI:57705"/>
    </ligand>
</feature>
<feature type="binding site" evidence="1">
    <location>
        <position position="194"/>
    </location>
    <ligand>
        <name>UDP-N-acetyl-alpha-D-glucosamine</name>
        <dbReference type="ChEBI" id="CHEBI:57705"/>
    </ligand>
</feature>
<feature type="binding site" evidence="1">
    <location>
        <position position="295"/>
    </location>
    <ligand>
        <name>UDP-N-acetyl-alpha-D-glucosamine</name>
        <dbReference type="ChEBI" id="CHEBI:57705"/>
    </ligand>
</feature>
<proteinExistence type="inferred from homology"/>
<sequence length="379" mass="39481">MSMAPIVLAAGGTGGHLFPAEALARELLERGHRVVLVTDVRGTAFGDALREVPVHRIRSATLGGGLLGKARTALELGIGTLQARRLLSRLEPAIVVGFGGYPSFPAVYAAAGLRIPVAIHEQNAVMGRANRMLARRARLICTSFPEVQGMDNVDRARAVRTGNPVRPAVLALRDRPYEAPLPGGSLDILVTGGSQGATVFGEIVPRAVAMLPEDLRLRLGIVQQARAENLQAARDGYAALGVQATLAPFFRDLPERLARCHLMIGRAGASTVAELTVAGRPSILVPYPHATDDHQTANARAVAAAGGAWIMPQPEFTAEALAARLTALLTDPAPLAPAAAAAAAWGLPDAARRLADAVLGAAGLGNGRSTPDSQMRAAE</sequence>
<accession>B6IRG2</accession>
<evidence type="ECO:0000255" key="1">
    <source>
        <dbReference type="HAMAP-Rule" id="MF_00033"/>
    </source>
</evidence>
<organism>
    <name type="scientific">Rhodospirillum centenum (strain ATCC 51521 / SW)</name>
    <dbReference type="NCBI Taxonomy" id="414684"/>
    <lineage>
        <taxon>Bacteria</taxon>
        <taxon>Pseudomonadati</taxon>
        <taxon>Pseudomonadota</taxon>
        <taxon>Alphaproteobacteria</taxon>
        <taxon>Rhodospirillales</taxon>
        <taxon>Rhodospirillaceae</taxon>
        <taxon>Rhodospirillum</taxon>
    </lineage>
</organism>
<reference key="1">
    <citation type="submission" date="2007-03" db="EMBL/GenBank/DDBJ databases">
        <title>Genome sequence of Rhodospirillum centenum.</title>
        <authorList>
            <person name="Touchman J.W."/>
            <person name="Bauer C."/>
            <person name="Blankenship R.E."/>
        </authorList>
    </citation>
    <scope>NUCLEOTIDE SEQUENCE [LARGE SCALE GENOMIC DNA]</scope>
    <source>
        <strain>ATCC 51521 / SW</strain>
    </source>
</reference>
<protein>
    <recommendedName>
        <fullName evidence="1">UDP-N-acetylglucosamine--N-acetylmuramyl-(pentapeptide) pyrophosphoryl-undecaprenol N-acetylglucosamine transferase</fullName>
        <ecNumber evidence="1">2.4.1.227</ecNumber>
    </recommendedName>
    <alternativeName>
        <fullName evidence="1">Undecaprenyl-PP-MurNAc-pentapeptide-UDPGlcNAc GlcNAc transferase</fullName>
    </alternativeName>
</protein>
<dbReference type="EC" id="2.4.1.227" evidence="1"/>
<dbReference type="EMBL" id="CP000613">
    <property type="protein sequence ID" value="ACI98048.1"/>
    <property type="molecule type" value="Genomic_DNA"/>
</dbReference>
<dbReference type="RefSeq" id="WP_012565840.1">
    <property type="nucleotide sequence ID" value="NC_011420.2"/>
</dbReference>
<dbReference type="SMR" id="B6IRG2"/>
<dbReference type="STRING" id="414684.RC1_0613"/>
<dbReference type="CAZy" id="GT28">
    <property type="family name" value="Glycosyltransferase Family 28"/>
</dbReference>
<dbReference type="KEGG" id="rce:RC1_0613"/>
<dbReference type="eggNOG" id="COG0707">
    <property type="taxonomic scope" value="Bacteria"/>
</dbReference>
<dbReference type="HOGENOM" id="CLU_037404_2_1_5"/>
<dbReference type="OrthoDB" id="9808936at2"/>
<dbReference type="UniPathway" id="UPA00219"/>
<dbReference type="Proteomes" id="UP000001591">
    <property type="component" value="Chromosome"/>
</dbReference>
<dbReference type="GO" id="GO:0005886">
    <property type="term" value="C:plasma membrane"/>
    <property type="evidence" value="ECO:0007669"/>
    <property type="project" value="UniProtKB-SubCell"/>
</dbReference>
<dbReference type="GO" id="GO:0051991">
    <property type="term" value="F:UDP-N-acetyl-D-glucosamine:N-acetylmuramoyl-L-alanyl-D-glutamyl-meso-2,6-diaminopimelyl-D-alanyl-D-alanine-diphosphoundecaprenol 4-beta-N-acetylglucosaminlytransferase activity"/>
    <property type="evidence" value="ECO:0007669"/>
    <property type="project" value="RHEA"/>
</dbReference>
<dbReference type="GO" id="GO:0050511">
    <property type="term" value="F:undecaprenyldiphospho-muramoylpentapeptide beta-N-acetylglucosaminyltransferase activity"/>
    <property type="evidence" value="ECO:0007669"/>
    <property type="project" value="UniProtKB-UniRule"/>
</dbReference>
<dbReference type="GO" id="GO:0005975">
    <property type="term" value="P:carbohydrate metabolic process"/>
    <property type="evidence" value="ECO:0007669"/>
    <property type="project" value="InterPro"/>
</dbReference>
<dbReference type="GO" id="GO:0051301">
    <property type="term" value="P:cell division"/>
    <property type="evidence" value="ECO:0007669"/>
    <property type="project" value="UniProtKB-KW"/>
</dbReference>
<dbReference type="GO" id="GO:0071555">
    <property type="term" value="P:cell wall organization"/>
    <property type="evidence" value="ECO:0007669"/>
    <property type="project" value="UniProtKB-KW"/>
</dbReference>
<dbReference type="GO" id="GO:0030259">
    <property type="term" value="P:lipid glycosylation"/>
    <property type="evidence" value="ECO:0007669"/>
    <property type="project" value="UniProtKB-UniRule"/>
</dbReference>
<dbReference type="GO" id="GO:0009252">
    <property type="term" value="P:peptidoglycan biosynthetic process"/>
    <property type="evidence" value="ECO:0007669"/>
    <property type="project" value="UniProtKB-UniRule"/>
</dbReference>
<dbReference type="GO" id="GO:0008360">
    <property type="term" value="P:regulation of cell shape"/>
    <property type="evidence" value="ECO:0007669"/>
    <property type="project" value="UniProtKB-KW"/>
</dbReference>
<dbReference type="CDD" id="cd03785">
    <property type="entry name" value="GT28_MurG"/>
    <property type="match status" value="1"/>
</dbReference>
<dbReference type="Gene3D" id="3.40.50.2000">
    <property type="entry name" value="Glycogen Phosphorylase B"/>
    <property type="match status" value="2"/>
</dbReference>
<dbReference type="HAMAP" id="MF_00033">
    <property type="entry name" value="MurG"/>
    <property type="match status" value="1"/>
</dbReference>
<dbReference type="InterPro" id="IPR006009">
    <property type="entry name" value="GlcNAc_MurG"/>
</dbReference>
<dbReference type="InterPro" id="IPR007235">
    <property type="entry name" value="Glyco_trans_28_C"/>
</dbReference>
<dbReference type="InterPro" id="IPR004276">
    <property type="entry name" value="GlycoTrans_28_N"/>
</dbReference>
<dbReference type="NCBIfam" id="TIGR01133">
    <property type="entry name" value="murG"/>
    <property type="match status" value="1"/>
</dbReference>
<dbReference type="PANTHER" id="PTHR21015:SF22">
    <property type="entry name" value="GLYCOSYLTRANSFERASE"/>
    <property type="match status" value="1"/>
</dbReference>
<dbReference type="PANTHER" id="PTHR21015">
    <property type="entry name" value="UDP-N-ACETYLGLUCOSAMINE--N-ACETYLMURAMYL-(PENTAPEPTIDE) PYROPHOSPHORYL-UNDECAPRENOL N-ACETYLGLUCOSAMINE TRANSFERASE 1"/>
    <property type="match status" value="1"/>
</dbReference>
<dbReference type="Pfam" id="PF04101">
    <property type="entry name" value="Glyco_tran_28_C"/>
    <property type="match status" value="1"/>
</dbReference>
<dbReference type="Pfam" id="PF03033">
    <property type="entry name" value="Glyco_transf_28"/>
    <property type="match status" value="1"/>
</dbReference>
<dbReference type="SUPFAM" id="SSF53756">
    <property type="entry name" value="UDP-Glycosyltransferase/glycogen phosphorylase"/>
    <property type="match status" value="1"/>
</dbReference>
<gene>
    <name evidence="1" type="primary">murG</name>
    <name type="ordered locus">RC1_0613</name>
</gene>
<comment type="function">
    <text evidence="1">Cell wall formation. Catalyzes the transfer of a GlcNAc subunit on undecaprenyl-pyrophosphoryl-MurNAc-pentapeptide (lipid intermediate I) to form undecaprenyl-pyrophosphoryl-MurNAc-(pentapeptide)GlcNAc (lipid intermediate II).</text>
</comment>
<comment type="catalytic activity">
    <reaction evidence="1">
        <text>di-trans,octa-cis-undecaprenyl diphospho-N-acetyl-alpha-D-muramoyl-L-alanyl-D-glutamyl-meso-2,6-diaminopimeloyl-D-alanyl-D-alanine + UDP-N-acetyl-alpha-D-glucosamine = di-trans,octa-cis-undecaprenyl diphospho-[N-acetyl-alpha-D-glucosaminyl-(1-&gt;4)]-N-acetyl-alpha-D-muramoyl-L-alanyl-D-glutamyl-meso-2,6-diaminopimeloyl-D-alanyl-D-alanine + UDP + H(+)</text>
        <dbReference type="Rhea" id="RHEA:31227"/>
        <dbReference type="ChEBI" id="CHEBI:15378"/>
        <dbReference type="ChEBI" id="CHEBI:57705"/>
        <dbReference type="ChEBI" id="CHEBI:58223"/>
        <dbReference type="ChEBI" id="CHEBI:61387"/>
        <dbReference type="ChEBI" id="CHEBI:61388"/>
        <dbReference type="EC" id="2.4.1.227"/>
    </reaction>
</comment>
<comment type="pathway">
    <text evidence="1">Cell wall biogenesis; peptidoglycan biosynthesis.</text>
</comment>
<comment type="subcellular location">
    <subcellularLocation>
        <location evidence="1">Cell inner membrane</location>
        <topology evidence="1">Peripheral membrane protein</topology>
        <orientation evidence="1">Cytoplasmic side</orientation>
    </subcellularLocation>
</comment>
<comment type="similarity">
    <text evidence="1">Belongs to the glycosyltransferase 28 family. MurG subfamily.</text>
</comment>
<name>MURG_RHOCS</name>
<keyword id="KW-0131">Cell cycle</keyword>
<keyword id="KW-0132">Cell division</keyword>
<keyword id="KW-0997">Cell inner membrane</keyword>
<keyword id="KW-1003">Cell membrane</keyword>
<keyword id="KW-0133">Cell shape</keyword>
<keyword id="KW-0961">Cell wall biogenesis/degradation</keyword>
<keyword id="KW-0328">Glycosyltransferase</keyword>
<keyword id="KW-0472">Membrane</keyword>
<keyword id="KW-0573">Peptidoglycan synthesis</keyword>
<keyword id="KW-1185">Reference proteome</keyword>
<keyword id="KW-0808">Transferase</keyword>